<gene>
    <name evidence="1" type="primary">rsgA</name>
    <name type="ordered locus">LCA_0693</name>
</gene>
<feature type="chain" id="PRO_1000188096" description="Small ribosomal subunit biogenesis GTPase RsgA">
    <location>
        <begin position="1"/>
        <end position="299"/>
    </location>
</feature>
<feature type="domain" description="CP-type G" evidence="2">
    <location>
        <begin position="64"/>
        <end position="225"/>
    </location>
</feature>
<feature type="binding site" evidence="1">
    <location>
        <begin position="113"/>
        <end position="116"/>
    </location>
    <ligand>
        <name>GTP</name>
        <dbReference type="ChEBI" id="CHEBI:37565"/>
    </ligand>
</feature>
<feature type="binding site" evidence="1">
    <location>
        <begin position="168"/>
        <end position="176"/>
    </location>
    <ligand>
        <name>GTP</name>
        <dbReference type="ChEBI" id="CHEBI:37565"/>
    </ligand>
</feature>
<feature type="binding site" evidence="1">
    <location>
        <position position="249"/>
    </location>
    <ligand>
        <name>Zn(2+)</name>
        <dbReference type="ChEBI" id="CHEBI:29105"/>
    </ligand>
</feature>
<feature type="binding site" evidence="1">
    <location>
        <position position="254"/>
    </location>
    <ligand>
        <name>Zn(2+)</name>
        <dbReference type="ChEBI" id="CHEBI:29105"/>
    </ligand>
</feature>
<feature type="binding site" evidence="1">
    <location>
        <position position="256"/>
    </location>
    <ligand>
        <name>Zn(2+)</name>
        <dbReference type="ChEBI" id="CHEBI:29105"/>
    </ligand>
</feature>
<feature type="binding site" evidence="1">
    <location>
        <position position="262"/>
    </location>
    <ligand>
        <name>Zn(2+)</name>
        <dbReference type="ChEBI" id="CHEBI:29105"/>
    </ligand>
</feature>
<protein>
    <recommendedName>
        <fullName evidence="1">Small ribosomal subunit biogenesis GTPase RsgA</fullName>
        <ecNumber evidence="1">3.6.1.-</ecNumber>
    </recommendedName>
</protein>
<proteinExistence type="inferred from homology"/>
<name>RSGA_LATSS</name>
<comment type="function">
    <text evidence="1">One of several proteins that assist in the late maturation steps of the functional core of the 30S ribosomal subunit. Helps release RbfA from mature subunits. May play a role in the assembly of ribosomal proteins into the subunit. Circularly permuted GTPase that catalyzes slow GTP hydrolysis, GTPase activity is stimulated by the 30S ribosomal subunit.</text>
</comment>
<comment type="cofactor">
    <cofactor evidence="1">
        <name>Zn(2+)</name>
        <dbReference type="ChEBI" id="CHEBI:29105"/>
    </cofactor>
    <text evidence="1">Binds 1 zinc ion per subunit.</text>
</comment>
<comment type="subunit">
    <text evidence="1">Monomer. Associates with 30S ribosomal subunit, binds 16S rRNA.</text>
</comment>
<comment type="subcellular location">
    <subcellularLocation>
        <location evidence="1">Cytoplasm</location>
    </subcellularLocation>
</comment>
<comment type="similarity">
    <text evidence="1">Belongs to the TRAFAC class YlqF/YawG GTPase family. RsgA subfamily.</text>
</comment>
<organism>
    <name type="scientific">Latilactobacillus sakei subsp. sakei (strain 23K)</name>
    <name type="common">Lactobacillus sakei subsp. sakei</name>
    <dbReference type="NCBI Taxonomy" id="314315"/>
    <lineage>
        <taxon>Bacteria</taxon>
        <taxon>Bacillati</taxon>
        <taxon>Bacillota</taxon>
        <taxon>Bacilli</taxon>
        <taxon>Lactobacillales</taxon>
        <taxon>Lactobacillaceae</taxon>
        <taxon>Latilactobacillus</taxon>
    </lineage>
</organism>
<reference key="1">
    <citation type="journal article" date="2005" name="Nat. Biotechnol.">
        <title>The complete genome sequence of the meat-borne lactic acid bacterium Lactobacillus sakei 23K.</title>
        <authorList>
            <person name="Chaillou S."/>
            <person name="Champomier-Verges M.-C."/>
            <person name="Cornet M."/>
            <person name="Crutz-Le Coq A.-M."/>
            <person name="Dudez A.-M."/>
            <person name="Martin V."/>
            <person name="Beaufils S."/>
            <person name="Darbon-Rongere E."/>
            <person name="Bossy R."/>
            <person name="Loux V."/>
            <person name="Zagorec M."/>
        </authorList>
    </citation>
    <scope>NUCLEOTIDE SEQUENCE [LARGE SCALE GENOMIC DNA]</scope>
    <source>
        <strain>23K</strain>
    </source>
</reference>
<sequence>MQTGQIIRALSGFYDVQSEHKIYRTRARGNFRKRKITPLVGDFVEFESESQTESGYILEILDRKNEMIRPPVANIDQAVVIVSAVEPDFSLNLLDRFLIYLESLNIQGLVYLTKTDMISDEKYQEIKQYLDYYEKVGYPTFAPRTAFTPEIIQAIEDTFPDKTTVFTGQTGAGKSTLLNHIDPKLNLATAEISQSLNRGKHTTRHIELIPLNDGLVGDTPGFSSLGILNVTSETLVSRYPEFREIGQDCKFRTCQHVMEPKCAVKAAVDAGEIMQSRYTNYLQFRAELKDIRPVYKKSK</sequence>
<evidence type="ECO:0000255" key="1">
    <source>
        <dbReference type="HAMAP-Rule" id="MF_01820"/>
    </source>
</evidence>
<evidence type="ECO:0000255" key="2">
    <source>
        <dbReference type="PROSITE-ProRule" id="PRU01058"/>
    </source>
</evidence>
<dbReference type="EC" id="3.6.1.-" evidence="1"/>
<dbReference type="EMBL" id="CR936503">
    <property type="protein sequence ID" value="CAI54997.1"/>
    <property type="molecule type" value="Genomic_DNA"/>
</dbReference>
<dbReference type="SMR" id="Q38XT2"/>
<dbReference type="STRING" id="314315.LCA_0693"/>
<dbReference type="KEGG" id="lsa:LCA_0693"/>
<dbReference type="eggNOG" id="COG1162">
    <property type="taxonomic scope" value="Bacteria"/>
</dbReference>
<dbReference type="HOGENOM" id="CLU_033617_2_1_9"/>
<dbReference type="OrthoDB" id="9809485at2"/>
<dbReference type="Proteomes" id="UP000002707">
    <property type="component" value="Chromosome"/>
</dbReference>
<dbReference type="GO" id="GO:0005737">
    <property type="term" value="C:cytoplasm"/>
    <property type="evidence" value="ECO:0007669"/>
    <property type="project" value="UniProtKB-SubCell"/>
</dbReference>
<dbReference type="GO" id="GO:0005525">
    <property type="term" value="F:GTP binding"/>
    <property type="evidence" value="ECO:0007669"/>
    <property type="project" value="UniProtKB-UniRule"/>
</dbReference>
<dbReference type="GO" id="GO:0003924">
    <property type="term" value="F:GTPase activity"/>
    <property type="evidence" value="ECO:0007669"/>
    <property type="project" value="UniProtKB-UniRule"/>
</dbReference>
<dbReference type="GO" id="GO:0046872">
    <property type="term" value="F:metal ion binding"/>
    <property type="evidence" value="ECO:0007669"/>
    <property type="project" value="UniProtKB-KW"/>
</dbReference>
<dbReference type="GO" id="GO:0019843">
    <property type="term" value="F:rRNA binding"/>
    <property type="evidence" value="ECO:0007669"/>
    <property type="project" value="UniProtKB-KW"/>
</dbReference>
<dbReference type="GO" id="GO:0042274">
    <property type="term" value="P:ribosomal small subunit biogenesis"/>
    <property type="evidence" value="ECO:0007669"/>
    <property type="project" value="UniProtKB-UniRule"/>
</dbReference>
<dbReference type="CDD" id="cd04466">
    <property type="entry name" value="S1_YloQ_GTPase"/>
    <property type="match status" value="1"/>
</dbReference>
<dbReference type="CDD" id="cd01854">
    <property type="entry name" value="YjeQ_EngC"/>
    <property type="match status" value="1"/>
</dbReference>
<dbReference type="Gene3D" id="2.40.50.140">
    <property type="entry name" value="Nucleic acid-binding proteins"/>
    <property type="match status" value="1"/>
</dbReference>
<dbReference type="Gene3D" id="3.40.50.300">
    <property type="entry name" value="P-loop containing nucleotide triphosphate hydrolases"/>
    <property type="match status" value="1"/>
</dbReference>
<dbReference type="Gene3D" id="1.10.40.50">
    <property type="entry name" value="Probable gtpase engc, domain 3"/>
    <property type="match status" value="1"/>
</dbReference>
<dbReference type="HAMAP" id="MF_01820">
    <property type="entry name" value="GTPase_RsgA"/>
    <property type="match status" value="1"/>
</dbReference>
<dbReference type="InterPro" id="IPR030378">
    <property type="entry name" value="G_CP_dom"/>
</dbReference>
<dbReference type="InterPro" id="IPR012340">
    <property type="entry name" value="NA-bd_OB-fold"/>
</dbReference>
<dbReference type="InterPro" id="IPR027417">
    <property type="entry name" value="P-loop_NTPase"/>
</dbReference>
<dbReference type="InterPro" id="IPR004881">
    <property type="entry name" value="Ribosome_biogen_GTPase_RsgA"/>
</dbReference>
<dbReference type="InterPro" id="IPR010914">
    <property type="entry name" value="RsgA_GTPase_dom"/>
</dbReference>
<dbReference type="InterPro" id="IPR031944">
    <property type="entry name" value="RsgA_N"/>
</dbReference>
<dbReference type="NCBIfam" id="TIGR00157">
    <property type="entry name" value="ribosome small subunit-dependent GTPase A"/>
    <property type="match status" value="1"/>
</dbReference>
<dbReference type="PANTHER" id="PTHR32120">
    <property type="entry name" value="SMALL RIBOSOMAL SUBUNIT BIOGENESIS GTPASE RSGA"/>
    <property type="match status" value="1"/>
</dbReference>
<dbReference type="PANTHER" id="PTHR32120:SF11">
    <property type="entry name" value="SMALL RIBOSOMAL SUBUNIT BIOGENESIS GTPASE RSGA 1, MITOCHONDRIAL-RELATED"/>
    <property type="match status" value="1"/>
</dbReference>
<dbReference type="Pfam" id="PF03193">
    <property type="entry name" value="RsgA_GTPase"/>
    <property type="match status" value="1"/>
</dbReference>
<dbReference type="Pfam" id="PF16745">
    <property type="entry name" value="RsgA_N"/>
    <property type="match status" value="1"/>
</dbReference>
<dbReference type="SUPFAM" id="SSF50249">
    <property type="entry name" value="Nucleic acid-binding proteins"/>
    <property type="match status" value="1"/>
</dbReference>
<dbReference type="SUPFAM" id="SSF52540">
    <property type="entry name" value="P-loop containing nucleoside triphosphate hydrolases"/>
    <property type="match status" value="1"/>
</dbReference>
<dbReference type="PROSITE" id="PS50936">
    <property type="entry name" value="ENGC_GTPASE"/>
    <property type="match status" value="1"/>
</dbReference>
<dbReference type="PROSITE" id="PS51721">
    <property type="entry name" value="G_CP"/>
    <property type="match status" value="1"/>
</dbReference>
<keyword id="KW-0963">Cytoplasm</keyword>
<keyword id="KW-0342">GTP-binding</keyword>
<keyword id="KW-0378">Hydrolase</keyword>
<keyword id="KW-0479">Metal-binding</keyword>
<keyword id="KW-0547">Nucleotide-binding</keyword>
<keyword id="KW-1185">Reference proteome</keyword>
<keyword id="KW-0690">Ribosome biogenesis</keyword>
<keyword id="KW-0694">RNA-binding</keyword>
<keyword id="KW-0699">rRNA-binding</keyword>
<keyword id="KW-0862">Zinc</keyword>
<accession>Q38XT2</accession>